<evidence type="ECO:0000255" key="1">
    <source>
        <dbReference type="HAMAP-Rule" id="MF_00109"/>
    </source>
</evidence>
<feature type="chain" id="PRO_1000094406" description="Shikimate kinase 1">
    <location>
        <begin position="1"/>
        <end position="173"/>
    </location>
</feature>
<feature type="binding site" evidence="1">
    <location>
        <begin position="14"/>
        <end position="19"/>
    </location>
    <ligand>
        <name>ATP</name>
        <dbReference type="ChEBI" id="CHEBI:30616"/>
    </ligand>
</feature>
<feature type="binding site" evidence="1">
    <location>
        <position position="18"/>
    </location>
    <ligand>
        <name>Mg(2+)</name>
        <dbReference type="ChEBI" id="CHEBI:18420"/>
    </ligand>
</feature>
<feature type="binding site" evidence="1">
    <location>
        <position position="36"/>
    </location>
    <ligand>
        <name>substrate</name>
    </ligand>
</feature>
<feature type="binding site" evidence="1">
    <location>
        <position position="60"/>
    </location>
    <ligand>
        <name>substrate</name>
    </ligand>
</feature>
<feature type="binding site" evidence="1">
    <location>
        <position position="82"/>
    </location>
    <ligand>
        <name>substrate</name>
    </ligand>
</feature>
<feature type="binding site" evidence="1">
    <location>
        <position position="120"/>
    </location>
    <ligand>
        <name>ATP</name>
        <dbReference type="ChEBI" id="CHEBI:30616"/>
    </ligand>
</feature>
<feature type="binding site" evidence="1">
    <location>
        <position position="140"/>
    </location>
    <ligand>
        <name>substrate</name>
    </ligand>
</feature>
<feature type="binding site" evidence="1">
    <location>
        <position position="157"/>
    </location>
    <ligand>
        <name>ATP</name>
        <dbReference type="ChEBI" id="CHEBI:30616"/>
    </ligand>
</feature>
<sequence length="173" mass="19470">MAEKRNIFLVGPMGAGKSTIGRQLAQQLNMEFYDSDQEIEKRTGADVGWVFDVEGEDGFRNREEKVINELTEKQGIVLATGGGSVKSRETRNRLSARGVVVYLETTIEKQLARTQRDKKRPLLQVEAPPREVLEALANERNPLYEEIADVTIRTDDQSAKVVANQIIHMLESN</sequence>
<proteinExistence type="inferred from homology"/>
<gene>
    <name evidence="1" type="primary">aroK</name>
    <name type="ordered locus">SEN3313</name>
</gene>
<keyword id="KW-0028">Amino-acid biosynthesis</keyword>
<keyword id="KW-0057">Aromatic amino acid biosynthesis</keyword>
<keyword id="KW-0067">ATP-binding</keyword>
<keyword id="KW-0963">Cytoplasm</keyword>
<keyword id="KW-0418">Kinase</keyword>
<keyword id="KW-0460">Magnesium</keyword>
<keyword id="KW-0479">Metal-binding</keyword>
<keyword id="KW-0547">Nucleotide-binding</keyword>
<keyword id="KW-0808">Transferase</keyword>
<accession>B5R2D6</accession>
<reference key="1">
    <citation type="journal article" date="2008" name="Genome Res.">
        <title>Comparative genome analysis of Salmonella enteritidis PT4 and Salmonella gallinarum 287/91 provides insights into evolutionary and host adaptation pathways.</title>
        <authorList>
            <person name="Thomson N.R."/>
            <person name="Clayton D.J."/>
            <person name="Windhorst D."/>
            <person name="Vernikos G."/>
            <person name="Davidson S."/>
            <person name="Churcher C."/>
            <person name="Quail M.A."/>
            <person name="Stevens M."/>
            <person name="Jones M.A."/>
            <person name="Watson M."/>
            <person name="Barron A."/>
            <person name="Layton A."/>
            <person name="Pickard D."/>
            <person name="Kingsley R.A."/>
            <person name="Bignell A."/>
            <person name="Clark L."/>
            <person name="Harris B."/>
            <person name="Ormond D."/>
            <person name="Abdellah Z."/>
            <person name="Brooks K."/>
            <person name="Cherevach I."/>
            <person name="Chillingworth T."/>
            <person name="Woodward J."/>
            <person name="Norberczak H."/>
            <person name="Lord A."/>
            <person name="Arrowsmith C."/>
            <person name="Jagels K."/>
            <person name="Moule S."/>
            <person name="Mungall K."/>
            <person name="Saunders M."/>
            <person name="Whitehead S."/>
            <person name="Chabalgoity J.A."/>
            <person name="Maskell D."/>
            <person name="Humphreys T."/>
            <person name="Roberts M."/>
            <person name="Barrow P.A."/>
            <person name="Dougan G."/>
            <person name="Parkhill J."/>
        </authorList>
    </citation>
    <scope>NUCLEOTIDE SEQUENCE [LARGE SCALE GENOMIC DNA]</scope>
    <source>
        <strain>P125109</strain>
    </source>
</reference>
<organism>
    <name type="scientific">Salmonella enteritidis PT4 (strain P125109)</name>
    <dbReference type="NCBI Taxonomy" id="550537"/>
    <lineage>
        <taxon>Bacteria</taxon>
        <taxon>Pseudomonadati</taxon>
        <taxon>Pseudomonadota</taxon>
        <taxon>Gammaproteobacteria</taxon>
        <taxon>Enterobacterales</taxon>
        <taxon>Enterobacteriaceae</taxon>
        <taxon>Salmonella</taxon>
    </lineage>
</organism>
<dbReference type="EC" id="2.7.1.71" evidence="1"/>
<dbReference type="EMBL" id="AM933172">
    <property type="protein sequence ID" value="CAR34888.1"/>
    <property type="molecule type" value="Genomic_DNA"/>
</dbReference>
<dbReference type="RefSeq" id="WP_000818621.1">
    <property type="nucleotide sequence ID" value="NC_011294.1"/>
</dbReference>
<dbReference type="SMR" id="B5R2D6"/>
<dbReference type="GeneID" id="66757820"/>
<dbReference type="KEGG" id="set:SEN3313"/>
<dbReference type="HOGENOM" id="CLU_057607_2_2_6"/>
<dbReference type="UniPathway" id="UPA00053">
    <property type="reaction ID" value="UER00088"/>
</dbReference>
<dbReference type="Proteomes" id="UP000000613">
    <property type="component" value="Chromosome"/>
</dbReference>
<dbReference type="GO" id="GO:0005829">
    <property type="term" value="C:cytosol"/>
    <property type="evidence" value="ECO:0007669"/>
    <property type="project" value="TreeGrafter"/>
</dbReference>
<dbReference type="GO" id="GO:0005524">
    <property type="term" value="F:ATP binding"/>
    <property type="evidence" value="ECO:0007669"/>
    <property type="project" value="UniProtKB-UniRule"/>
</dbReference>
<dbReference type="GO" id="GO:0000287">
    <property type="term" value="F:magnesium ion binding"/>
    <property type="evidence" value="ECO:0007669"/>
    <property type="project" value="UniProtKB-UniRule"/>
</dbReference>
<dbReference type="GO" id="GO:0004765">
    <property type="term" value="F:shikimate kinase activity"/>
    <property type="evidence" value="ECO:0007669"/>
    <property type="project" value="UniProtKB-UniRule"/>
</dbReference>
<dbReference type="GO" id="GO:0008652">
    <property type="term" value="P:amino acid biosynthetic process"/>
    <property type="evidence" value="ECO:0007669"/>
    <property type="project" value="UniProtKB-KW"/>
</dbReference>
<dbReference type="GO" id="GO:0009073">
    <property type="term" value="P:aromatic amino acid family biosynthetic process"/>
    <property type="evidence" value="ECO:0007669"/>
    <property type="project" value="UniProtKB-KW"/>
</dbReference>
<dbReference type="GO" id="GO:0009423">
    <property type="term" value="P:chorismate biosynthetic process"/>
    <property type="evidence" value="ECO:0007669"/>
    <property type="project" value="UniProtKB-UniRule"/>
</dbReference>
<dbReference type="CDD" id="cd00464">
    <property type="entry name" value="SK"/>
    <property type="match status" value="1"/>
</dbReference>
<dbReference type="FunFam" id="3.40.50.300:FF:000099">
    <property type="entry name" value="Shikimate kinase 1"/>
    <property type="match status" value="1"/>
</dbReference>
<dbReference type="Gene3D" id="3.40.50.300">
    <property type="entry name" value="P-loop containing nucleotide triphosphate hydrolases"/>
    <property type="match status" value="1"/>
</dbReference>
<dbReference type="HAMAP" id="MF_00109">
    <property type="entry name" value="Shikimate_kinase"/>
    <property type="match status" value="1"/>
</dbReference>
<dbReference type="InterPro" id="IPR027417">
    <property type="entry name" value="P-loop_NTPase"/>
</dbReference>
<dbReference type="InterPro" id="IPR031322">
    <property type="entry name" value="Shikimate/glucono_kinase"/>
</dbReference>
<dbReference type="InterPro" id="IPR000623">
    <property type="entry name" value="Shikimate_kinase/TSH1"/>
</dbReference>
<dbReference type="InterPro" id="IPR023000">
    <property type="entry name" value="Shikimate_kinase_CS"/>
</dbReference>
<dbReference type="NCBIfam" id="NF003456">
    <property type="entry name" value="PRK05057.1"/>
    <property type="match status" value="1"/>
</dbReference>
<dbReference type="PANTHER" id="PTHR21087">
    <property type="entry name" value="SHIKIMATE KINASE"/>
    <property type="match status" value="1"/>
</dbReference>
<dbReference type="PANTHER" id="PTHR21087:SF16">
    <property type="entry name" value="SHIKIMATE KINASE 1, CHLOROPLASTIC"/>
    <property type="match status" value="1"/>
</dbReference>
<dbReference type="Pfam" id="PF01202">
    <property type="entry name" value="SKI"/>
    <property type="match status" value="1"/>
</dbReference>
<dbReference type="PRINTS" id="PR01100">
    <property type="entry name" value="SHIKIMTKNASE"/>
</dbReference>
<dbReference type="SUPFAM" id="SSF52540">
    <property type="entry name" value="P-loop containing nucleoside triphosphate hydrolases"/>
    <property type="match status" value="1"/>
</dbReference>
<dbReference type="PROSITE" id="PS01128">
    <property type="entry name" value="SHIKIMATE_KINASE"/>
    <property type="match status" value="1"/>
</dbReference>
<name>AROK_SALEP</name>
<protein>
    <recommendedName>
        <fullName evidence="1">Shikimate kinase 1</fullName>
        <shortName evidence="1">SK 1</shortName>
        <ecNumber evidence="1">2.7.1.71</ecNumber>
    </recommendedName>
</protein>
<comment type="function">
    <text evidence="1">Catalyzes the specific phosphorylation of the 3-hydroxyl group of shikimic acid using ATP as a cosubstrate.</text>
</comment>
<comment type="catalytic activity">
    <reaction evidence="1">
        <text>shikimate + ATP = 3-phosphoshikimate + ADP + H(+)</text>
        <dbReference type="Rhea" id="RHEA:13121"/>
        <dbReference type="ChEBI" id="CHEBI:15378"/>
        <dbReference type="ChEBI" id="CHEBI:30616"/>
        <dbReference type="ChEBI" id="CHEBI:36208"/>
        <dbReference type="ChEBI" id="CHEBI:145989"/>
        <dbReference type="ChEBI" id="CHEBI:456216"/>
        <dbReference type="EC" id="2.7.1.71"/>
    </reaction>
</comment>
<comment type="cofactor">
    <cofactor evidence="1">
        <name>Mg(2+)</name>
        <dbReference type="ChEBI" id="CHEBI:18420"/>
    </cofactor>
    <text evidence="1">Binds 1 Mg(2+) ion per subunit.</text>
</comment>
<comment type="pathway">
    <text evidence="1">Metabolic intermediate biosynthesis; chorismate biosynthesis; chorismate from D-erythrose 4-phosphate and phosphoenolpyruvate: step 5/7.</text>
</comment>
<comment type="subunit">
    <text evidence="1">Monomer.</text>
</comment>
<comment type="subcellular location">
    <subcellularLocation>
        <location evidence="1">Cytoplasm</location>
    </subcellularLocation>
</comment>
<comment type="similarity">
    <text evidence="1">Belongs to the shikimate kinase family.</text>
</comment>